<organism>
    <name type="scientific">Rhodobacter capsulatus</name>
    <name type="common">Rhodopseudomonas capsulata</name>
    <dbReference type="NCBI Taxonomy" id="1061"/>
    <lineage>
        <taxon>Bacteria</taxon>
        <taxon>Pseudomonadati</taxon>
        <taxon>Pseudomonadota</taxon>
        <taxon>Alphaproteobacteria</taxon>
        <taxon>Rhodobacterales</taxon>
        <taxon>Rhodobacter group</taxon>
        <taxon>Rhodobacter</taxon>
    </lineage>
</organism>
<keyword id="KW-0113">Calvin cycle</keyword>
<keyword id="KW-0120">Carbon dioxide fixation</keyword>
<keyword id="KW-0602">Photosynthesis</keyword>
<gene>
    <name evidence="1" type="primary">cbbS</name>
</gene>
<accession>O32741</accession>
<proteinExistence type="inferred from homology"/>
<name>RBS_RHOCA</name>
<dbReference type="EMBL" id="L82000">
    <property type="protein sequence ID" value="AAC37142.1"/>
    <property type="molecule type" value="Genomic_DNA"/>
</dbReference>
<dbReference type="RefSeq" id="WP_013066322.1">
    <property type="nucleotide sequence ID" value="NZ_VIBE01000010.1"/>
</dbReference>
<dbReference type="SMR" id="O32741"/>
<dbReference type="OMA" id="WNPAIEH"/>
<dbReference type="GO" id="GO:0016984">
    <property type="term" value="F:ribulose-bisphosphate carboxylase activity"/>
    <property type="evidence" value="ECO:0007669"/>
    <property type="project" value="UniProtKB-UniRule"/>
</dbReference>
<dbReference type="GO" id="GO:0019253">
    <property type="term" value="P:reductive pentose-phosphate cycle"/>
    <property type="evidence" value="ECO:0007669"/>
    <property type="project" value="UniProtKB-UniRule"/>
</dbReference>
<dbReference type="CDD" id="cd03527">
    <property type="entry name" value="RuBisCO_small"/>
    <property type="match status" value="1"/>
</dbReference>
<dbReference type="Gene3D" id="3.30.190.10">
    <property type="entry name" value="Ribulose bisphosphate carboxylase, small subunit"/>
    <property type="match status" value="1"/>
</dbReference>
<dbReference type="HAMAP" id="MF_00859">
    <property type="entry name" value="RuBisCO_S_bact"/>
    <property type="match status" value="1"/>
</dbReference>
<dbReference type="InterPro" id="IPR024681">
    <property type="entry name" value="RuBisCO_ssu"/>
</dbReference>
<dbReference type="InterPro" id="IPR000894">
    <property type="entry name" value="RuBisCO_ssu_dom"/>
</dbReference>
<dbReference type="InterPro" id="IPR036385">
    <property type="entry name" value="RuBisCO_ssu_sf"/>
</dbReference>
<dbReference type="PANTHER" id="PTHR31262">
    <property type="entry name" value="RIBULOSE BISPHOSPHATE CARBOXYLASE SMALL CHAIN 1, CHLOROPLASTIC"/>
    <property type="match status" value="1"/>
</dbReference>
<dbReference type="Pfam" id="PF00101">
    <property type="entry name" value="RuBisCO_small"/>
    <property type="match status" value="1"/>
</dbReference>
<dbReference type="SMART" id="SM00961">
    <property type="entry name" value="RuBisCO_small"/>
    <property type="match status" value="1"/>
</dbReference>
<dbReference type="SUPFAM" id="SSF55239">
    <property type="entry name" value="RuBisCO, small subunit"/>
    <property type="match status" value="1"/>
</dbReference>
<reference key="1">
    <citation type="submission" date="1997-07" db="EMBL/GenBank/DDBJ databases">
        <authorList>
            <person name="Shively J.M."/>
        </authorList>
    </citation>
    <scope>NUCLEOTIDE SEQUENCE [GENOMIC DNA]</scope>
</reference>
<evidence type="ECO:0000255" key="1">
    <source>
        <dbReference type="HAMAP-Rule" id="MF_00859"/>
    </source>
</evidence>
<protein>
    <recommendedName>
        <fullName evidence="1">Ribulose bisphosphate carboxylase small subunit</fullName>
        <shortName evidence="1">RuBisCO small subunit</shortName>
    </recommendedName>
</protein>
<sequence>MSTVQDYPSRLSRPESRKMGTFSYLPPMGEAEIRRQVEWIVKNGWNPGIEHTEPDFAAQIYWYMWKLPMFGETDVDAILAELKACHEANPGHHVRLIGYDNFTQSQGANMIVYRGTAV</sequence>
<comment type="function">
    <text evidence="1">RuBisCO catalyzes two reactions: the carboxylation of D-ribulose 1,5-bisphosphate, the primary event in carbon dioxide fixation, as well as the oxidative fragmentation of the pentose substrate. Both reactions occur simultaneously and in competition at the same active site. Although the small subunit is not catalytic it is essential for maximal activity.</text>
</comment>
<comment type="subunit">
    <text evidence="1">Heterohexadecamer of 8 large and 8 small subunits.</text>
</comment>
<comment type="miscellaneous">
    <text evidence="1">The basic functional RuBisCO is composed of a large chain homodimer in a 'head-to-tail' conformation. In form I RuBisCO this homodimer is arranged in a barrel-like tetramer with the small subunits forming a tetrameric 'cap' on each end of the 'barrel'.</text>
</comment>
<comment type="similarity">
    <text evidence="1">Belongs to the RuBisCO small chain family.</text>
</comment>
<feature type="chain" id="PRO_0000198621" description="Ribulose bisphosphate carboxylase small subunit">
    <location>
        <begin position="1"/>
        <end position="118"/>
    </location>
</feature>